<accession>B4GE47</accession>
<dbReference type="EMBL" id="CH479182">
    <property type="protein sequence ID" value="EDW33882.1"/>
    <property type="molecule type" value="Genomic_DNA"/>
</dbReference>
<dbReference type="RefSeq" id="XP_002016782.1">
    <property type="nucleotide sequence ID" value="XM_002016746.1"/>
</dbReference>
<dbReference type="SMR" id="B4GE47"/>
<dbReference type="STRING" id="7234.B4GE47"/>
<dbReference type="EnsemblMetazoa" id="FBtr0187504">
    <property type="protein sequence ID" value="FBpp0185996"/>
    <property type="gene ID" value="FBgn0159482"/>
</dbReference>
<dbReference type="EnsemblMetazoa" id="XM_002016746.2">
    <property type="protein sequence ID" value="XP_002016782.2"/>
    <property type="gene ID" value="LOC6591888"/>
</dbReference>
<dbReference type="GeneID" id="6591888"/>
<dbReference type="KEGG" id="dpe:6591888"/>
<dbReference type="CTD" id="42996"/>
<dbReference type="eggNOG" id="KOG1691">
    <property type="taxonomic scope" value="Eukaryota"/>
</dbReference>
<dbReference type="HOGENOM" id="CLU_066963_3_1_1"/>
<dbReference type="OMA" id="DVFEACF"/>
<dbReference type="OrthoDB" id="759142at2759"/>
<dbReference type="PhylomeDB" id="B4GE47"/>
<dbReference type="ChiTaRS" id="bai">
    <property type="organism name" value="fly"/>
</dbReference>
<dbReference type="Proteomes" id="UP000008744">
    <property type="component" value="Unassembled WGS sequence"/>
</dbReference>
<dbReference type="GO" id="GO:0005737">
    <property type="term" value="C:cytoplasm"/>
    <property type="evidence" value="ECO:0007669"/>
    <property type="project" value="GOC"/>
</dbReference>
<dbReference type="GO" id="GO:0016020">
    <property type="term" value="C:membrane"/>
    <property type="evidence" value="ECO:0007669"/>
    <property type="project" value="UniProtKB-SubCell"/>
</dbReference>
<dbReference type="GO" id="GO:0038024">
    <property type="term" value="F:cargo receptor activity"/>
    <property type="evidence" value="ECO:0007669"/>
    <property type="project" value="EnsemblMetazoa"/>
</dbReference>
<dbReference type="GO" id="GO:0009953">
    <property type="term" value="P:dorsal/ventral pattern formation"/>
    <property type="evidence" value="ECO:0000250"/>
    <property type="project" value="UniProtKB"/>
</dbReference>
<dbReference type="GO" id="GO:0006888">
    <property type="term" value="P:endoplasmic reticulum to Golgi vesicle-mediated transport"/>
    <property type="evidence" value="ECO:0007669"/>
    <property type="project" value="EnsemblMetazoa"/>
</dbReference>
<dbReference type="InterPro" id="IPR015720">
    <property type="entry name" value="Emp24-like"/>
</dbReference>
<dbReference type="InterPro" id="IPR009038">
    <property type="entry name" value="GOLD_dom"/>
</dbReference>
<dbReference type="PANTHER" id="PTHR22811">
    <property type="entry name" value="TRANSMEMBRANE EMP24 DOMAIN-CONTAINING PROTEIN"/>
    <property type="match status" value="1"/>
</dbReference>
<dbReference type="Pfam" id="PF01105">
    <property type="entry name" value="EMP24_GP25L"/>
    <property type="match status" value="1"/>
</dbReference>
<dbReference type="SMART" id="SM01190">
    <property type="entry name" value="EMP24_GP25L"/>
    <property type="match status" value="1"/>
</dbReference>
<dbReference type="PROSITE" id="PS50866">
    <property type="entry name" value="GOLD"/>
    <property type="match status" value="1"/>
</dbReference>
<proteinExistence type="inferred from homology"/>
<evidence type="ECO:0000250" key="1"/>
<evidence type="ECO:0000250" key="2">
    <source>
        <dbReference type="UniProtKB" id="Q8SXY6"/>
    </source>
</evidence>
<evidence type="ECO:0000255" key="3"/>
<evidence type="ECO:0000255" key="4">
    <source>
        <dbReference type="PROSITE-ProRule" id="PRU00096"/>
    </source>
</evidence>
<evidence type="ECO:0000312" key="5">
    <source>
        <dbReference type="EMBL" id="EDW33882.1"/>
    </source>
</evidence>
<protein>
    <recommendedName>
        <fullName evidence="2">Transmembrane emp24 domain-containing protein bai</fullName>
    </recommendedName>
</protein>
<comment type="function">
    <text evidence="2">Eca and bai are essential, though not redundant, for dorsoventral patterning of the embryo. Specifically required during early embryogenesis for the activity of maternal tkv, while the zygotic tkv is not affected (By similarity).</text>
</comment>
<comment type="subcellular location">
    <subcellularLocation>
        <location evidence="1">Membrane</location>
        <topology evidence="3">Single-pass type I membrane protein</topology>
    </subcellularLocation>
</comment>
<comment type="similarity">
    <text evidence="3">Belongs to the EMP24/GP25L family.</text>
</comment>
<reference evidence="5" key="1">
    <citation type="journal article" date="2007" name="Nature">
        <title>Evolution of genes and genomes on the Drosophila phylogeny.</title>
        <authorList>
            <consortium name="Drosophila 12 genomes consortium"/>
        </authorList>
    </citation>
    <scope>NUCLEOTIDE SEQUENCE [LARGE SCALE GENOMIC DNA]</scope>
    <source>
        <strain evidence="5">MSH-3 / Tucson 14011-0111.49</strain>
    </source>
</reference>
<keyword id="KW-0217">Developmental protein</keyword>
<keyword id="KW-0472">Membrane</keyword>
<keyword id="KW-1185">Reference proteome</keyword>
<keyword id="KW-0732">Signal</keyword>
<keyword id="KW-0812">Transmembrane</keyword>
<keyword id="KW-1133">Transmembrane helix</keyword>
<name>TMEDA_DROPE</name>
<feature type="signal peptide" evidence="3">
    <location>
        <begin position="1"/>
        <end position="17"/>
    </location>
</feature>
<feature type="chain" id="PRO_0000393919" description="Transmembrane emp24 domain-containing protein bai" evidence="3">
    <location>
        <begin position="18"/>
        <end position="206"/>
    </location>
</feature>
<feature type="topological domain" description="Lumenal" evidence="3">
    <location>
        <begin position="18"/>
        <end position="172"/>
    </location>
</feature>
<feature type="transmembrane region" description="Helical" evidence="3">
    <location>
        <begin position="173"/>
        <end position="193"/>
    </location>
</feature>
<feature type="topological domain" description="Cytoplasmic" evidence="3">
    <location>
        <begin position="194"/>
        <end position="206"/>
    </location>
</feature>
<feature type="domain" description="GOLD" evidence="4">
    <location>
        <begin position="30"/>
        <end position="140"/>
    </location>
</feature>
<organism>
    <name type="scientific">Drosophila persimilis</name>
    <name type="common">Fruit fly</name>
    <dbReference type="NCBI Taxonomy" id="7234"/>
    <lineage>
        <taxon>Eukaryota</taxon>
        <taxon>Metazoa</taxon>
        <taxon>Ecdysozoa</taxon>
        <taxon>Arthropoda</taxon>
        <taxon>Hexapoda</taxon>
        <taxon>Insecta</taxon>
        <taxon>Pterygota</taxon>
        <taxon>Neoptera</taxon>
        <taxon>Endopterygota</taxon>
        <taxon>Diptera</taxon>
        <taxon>Brachycera</taxon>
        <taxon>Muscomorpha</taxon>
        <taxon>Ephydroidea</taxon>
        <taxon>Drosophilidae</taxon>
        <taxon>Drosophila</taxon>
        <taxon>Sophophora</taxon>
    </lineage>
</organism>
<sequence length="206" mass="23922">MAKATFFYFLFIGYVWPIDSVMFNLAPNTQKCLKEDIQANQLVMGEYEVSDVPGQIIDYVARDTKGHILSQKEHITKGKFSFMSEVYDAYEICFISKVPPHQRGIPQEVSLVTKKGVETKSYEGIGEASKLKPLEVDLKRLEDLSDSIVRDFILMRKREEEMRDTNEKTNSRVLFFSIFSMCCLLGLATWQVLYLRRYFKAKKLIE</sequence>
<gene>
    <name evidence="2" type="primary">bai</name>
    <name type="ORF">GL21889</name>
</gene>